<dbReference type="EC" id="2.3.1.274" evidence="1"/>
<dbReference type="EMBL" id="CP000308">
    <property type="protein sequence ID" value="ABG13895.1"/>
    <property type="molecule type" value="Genomic_DNA"/>
</dbReference>
<dbReference type="RefSeq" id="WP_002210932.1">
    <property type="nucleotide sequence ID" value="NZ_CP009906.1"/>
</dbReference>
<dbReference type="SMR" id="Q1C6M7"/>
<dbReference type="GeneID" id="57976975"/>
<dbReference type="KEGG" id="ypa:YPA_1929"/>
<dbReference type="UniPathway" id="UPA00085"/>
<dbReference type="Proteomes" id="UP000001971">
    <property type="component" value="Chromosome"/>
</dbReference>
<dbReference type="GO" id="GO:0005737">
    <property type="term" value="C:cytoplasm"/>
    <property type="evidence" value="ECO:0007669"/>
    <property type="project" value="UniProtKB-SubCell"/>
</dbReference>
<dbReference type="GO" id="GO:0043811">
    <property type="term" value="F:phosphate:acyl-[acyl carrier protein] acyltransferase activity"/>
    <property type="evidence" value="ECO:0007669"/>
    <property type="project" value="UniProtKB-UniRule"/>
</dbReference>
<dbReference type="GO" id="GO:0006633">
    <property type="term" value="P:fatty acid biosynthetic process"/>
    <property type="evidence" value="ECO:0007669"/>
    <property type="project" value="UniProtKB-UniRule"/>
</dbReference>
<dbReference type="GO" id="GO:0008654">
    <property type="term" value="P:phospholipid biosynthetic process"/>
    <property type="evidence" value="ECO:0007669"/>
    <property type="project" value="UniProtKB-KW"/>
</dbReference>
<dbReference type="FunFam" id="3.40.718.10:FF:000008">
    <property type="entry name" value="Phosphate acyltransferase"/>
    <property type="match status" value="1"/>
</dbReference>
<dbReference type="Gene3D" id="3.40.718.10">
    <property type="entry name" value="Isopropylmalate Dehydrogenase"/>
    <property type="match status" value="1"/>
</dbReference>
<dbReference type="HAMAP" id="MF_00019">
    <property type="entry name" value="PlsX"/>
    <property type="match status" value="1"/>
</dbReference>
<dbReference type="InterPro" id="IPR003664">
    <property type="entry name" value="FA_synthesis"/>
</dbReference>
<dbReference type="InterPro" id="IPR012281">
    <property type="entry name" value="Phospholipid_synth_PlsX-like"/>
</dbReference>
<dbReference type="NCBIfam" id="TIGR00182">
    <property type="entry name" value="plsX"/>
    <property type="match status" value="1"/>
</dbReference>
<dbReference type="PANTHER" id="PTHR30100">
    <property type="entry name" value="FATTY ACID/PHOSPHOLIPID SYNTHESIS PROTEIN PLSX"/>
    <property type="match status" value="1"/>
</dbReference>
<dbReference type="PANTHER" id="PTHR30100:SF1">
    <property type="entry name" value="PHOSPHATE ACYLTRANSFERASE"/>
    <property type="match status" value="1"/>
</dbReference>
<dbReference type="Pfam" id="PF02504">
    <property type="entry name" value="FA_synthesis"/>
    <property type="match status" value="1"/>
</dbReference>
<dbReference type="PIRSF" id="PIRSF002465">
    <property type="entry name" value="Phsphlp_syn_PlsX"/>
    <property type="match status" value="1"/>
</dbReference>
<dbReference type="SUPFAM" id="SSF53659">
    <property type="entry name" value="Isocitrate/Isopropylmalate dehydrogenase-like"/>
    <property type="match status" value="1"/>
</dbReference>
<feature type="chain" id="PRO_1000001862" description="Phosphate acyltransferase">
    <location>
        <begin position="1"/>
        <end position="344"/>
    </location>
</feature>
<evidence type="ECO:0000255" key="1">
    <source>
        <dbReference type="HAMAP-Rule" id="MF_00019"/>
    </source>
</evidence>
<comment type="function">
    <text evidence="1">Catalyzes the reversible formation of acyl-phosphate (acyl-PO(4)) from acyl-[acyl-carrier-protein] (acyl-ACP). This enzyme utilizes acyl-ACP as fatty acyl donor, but not acyl-CoA.</text>
</comment>
<comment type="catalytic activity">
    <reaction evidence="1">
        <text>a fatty acyl-[ACP] + phosphate = an acyl phosphate + holo-[ACP]</text>
        <dbReference type="Rhea" id="RHEA:42292"/>
        <dbReference type="Rhea" id="RHEA-COMP:9685"/>
        <dbReference type="Rhea" id="RHEA-COMP:14125"/>
        <dbReference type="ChEBI" id="CHEBI:43474"/>
        <dbReference type="ChEBI" id="CHEBI:59918"/>
        <dbReference type="ChEBI" id="CHEBI:64479"/>
        <dbReference type="ChEBI" id="CHEBI:138651"/>
        <dbReference type="EC" id="2.3.1.274"/>
    </reaction>
</comment>
<comment type="pathway">
    <text evidence="1">Lipid metabolism; phospholipid metabolism.</text>
</comment>
<comment type="subunit">
    <text evidence="1">Homodimer. Probably interacts with PlsY.</text>
</comment>
<comment type="subcellular location">
    <subcellularLocation>
        <location evidence="1">Cytoplasm</location>
    </subcellularLocation>
    <text evidence="1">Associated with the membrane possibly through PlsY.</text>
</comment>
<comment type="similarity">
    <text evidence="1">Belongs to the PlsX family.</text>
</comment>
<accession>Q1C6M7</accession>
<protein>
    <recommendedName>
        <fullName evidence="1">Phosphate acyltransferase</fullName>
        <ecNumber evidence="1">2.3.1.274</ecNumber>
    </recommendedName>
    <alternativeName>
        <fullName evidence="1">Acyl-ACP phosphotransacylase</fullName>
    </alternativeName>
    <alternativeName>
        <fullName evidence="1">Acyl-[acyl-carrier-protein]--phosphate acyltransferase</fullName>
    </alternativeName>
    <alternativeName>
        <fullName evidence="1">Phosphate-acyl-ACP acyltransferase</fullName>
    </alternativeName>
</protein>
<name>PLSX_YERPA</name>
<keyword id="KW-0963">Cytoplasm</keyword>
<keyword id="KW-0444">Lipid biosynthesis</keyword>
<keyword id="KW-0443">Lipid metabolism</keyword>
<keyword id="KW-0594">Phospholipid biosynthesis</keyword>
<keyword id="KW-1208">Phospholipid metabolism</keyword>
<keyword id="KW-0808">Transferase</keyword>
<organism>
    <name type="scientific">Yersinia pestis bv. Antiqua (strain Antiqua)</name>
    <dbReference type="NCBI Taxonomy" id="360102"/>
    <lineage>
        <taxon>Bacteria</taxon>
        <taxon>Pseudomonadati</taxon>
        <taxon>Pseudomonadota</taxon>
        <taxon>Gammaproteobacteria</taxon>
        <taxon>Enterobacterales</taxon>
        <taxon>Yersiniaceae</taxon>
        <taxon>Yersinia</taxon>
    </lineage>
</organism>
<gene>
    <name evidence="1" type="primary">plsX</name>
    <name type="ordered locus">YPA_1929</name>
</gene>
<reference key="1">
    <citation type="journal article" date="2006" name="J. Bacteriol.">
        <title>Complete genome sequence of Yersinia pestis strains Antiqua and Nepal516: evidence of gene reduction in an emerging pathogen.</title>
        <authorList>
            <person name="Chain P.S.G."/>
            <person name="Hu P."/>
            <person name="Malfatti S.A."/>
            <person name="Radnedge L."/>
            <person name="Larimer F."/>
            <person name="Vergez L.M."/>
            <person name="Worsham P."/>
            <person name="Chu M.C."/>
            <person name="Andersen G.L."/>
        </authorList>
    </citation>
    <scope>NUCLEOTIDE SEQUENCE [LARGE SCALE GENOMIC DNA]</scope>
    <source>
        <strain>Antiqua</strain>
    </source>
</reference>
<sequence>MACLTLALDAMGGDFGPCVTVPASLQALASNPQLKLLLVGNPDTITPLLANADSLLLERLQVIPAEHVIASDAKPSQAIRASRGTSMRVALELVKNGEAAACVSAGNTGALMGLAKMMIKPLEGIARPALMTVIPNQRRSKTVVLDLGANVECDSTMLVQFAVMGSVMAEEVVGIVEPRVALLNIGEEENKGLDNIREAAAVLKNTPAINYIGYLEGNDLLTGKTDVMVCDGFVGNVTLKTMEGVIRMFLSLLKPSGEGSKQSWWLKLIGRWLQKRVAKRFGHLNPDQYNGACLLGLRGIVIKSHGAANQRAFAVAIEQAVQAVQRQVPERIAARLEAVLPKSD</sequence>
<proteinExistence type="inferred from homology"/>